<comment type="function">
    <text evidence="7">Aquaglyceroporin that may modulate the water content and osmolytes during anhydrobiosis (PubMed:23761966).</text>
</comment>
<comment type="catalytic activity">
    <reaction evidence="1">
        <text>H2O(in) = H2O(out)</text>
        <dbReference type="Rhea" id="RHEA:29667"/>
        <dbReference type="ChEBI" id="CHEBI:15377"/>
    </reaction>
</comment>
<comment type="catalytic activity">
    <reaction evidence="1">
        <text>glycerol(in) = glycerol(out)</text>
        <dbReference type="Rhea" id="RHEA:29675"/>
        <dbReference type="ChEBI" id="CHEBI:17754"/>
    </reaction>
</comment>
<comment type="subcellular location">
    <subcellularLocation>
        <location evidence="6">Cell membrane</location>
        <topology evidence="2">Multi-pass membrane protein</topology>
    </subcellularLocation>
</comment>
<comment type="induction">
    <text evidence="4">Transcript abundance is medium and expression levels are completely unaffected by desiccation or rehydratation (PubMed:23761966).</text>
</comment>
<comment type="domain">
    <text evidence="7">Aquaporins contain two tandem repeats each containing three membrane-spanning domains and a pore-forming loop with the signature motif Asn-Pro-Ala (NPA).</text>
</comment>
<comment type="similarity">
    <text evidence="6">Belongs to the MIP/aquaporin (TC 1.A.8) family.</text>
</comment>
<feature type="chain" id="PRO_0000440203" description="Aquaporin-2">
    <location>
        <begin position="1"/>
        <end position="323"/>
    </location>
</feature>
<feature type="transmembrane region" description="Helical" evidence="2">
    <location>
        <begin position="32"/>
        <end position="54"/>
    </location>
</feature>
<feature type="transmembrane region" description="Helical" evidence="2">
    <location>
        <begin position="74"/>
        <end position="96"/>
    </location>
</feature>
<feature type="transmembrane region" description="Helical" evidence="2">
    <location>
        <begin position="103"/>
        <end position="123"/>
    </location>
</feature>
<feature type="transmembrane region" description="Helical" evidence="2">
    <location>
        <begin position="161"/>
        <end position="181"/>
    </location>
</feature>
<feature type="transmembrane region" description="Helical" evidence="2">
    <location>
        <begin position="193"/>
        <end position="213"/>
    </location>
</feature>
<feature type="transmembrane region" description="Helical" evidence="2">
    <location>
        <begin position="243"/>
        <end position="263"/>
    </location>
</feature>
<feature type="short sequence motif" description="NPA 1">
    <location>
        <begin position="85"/>
        <end position="87"/>
    </location>
</feature>
<feature type="short sequence motif" description="NPA 2">
    <location>
        <begin position="217"/>
        <end position="219"/>
    </location>
</feature>
<feature type="glycosylation site" description="N-linked (GlcNAc...) asparagine" evidence="3">
    <location>
        <position position="143"/>
    </location>
</feature>
<feature type="glycosylation site" description="N-linked (GlcNAc...) asparagine" evidence="3">
    <location>
        <position position="292"/>
    </location>
</feature>
<proteinExistence type="evidence at transcript level"/>
<gene>
    <name evidence="5" type="primary">AQP2</name>
</gene>
<evidence type="ECO:0000250" key="1">
    <source>
        <dbReference type="UniProtKB" id="P41181"/>
    </source>
</evidence>
<evidence type="ECO:0000255" key="2"/>
<evidence type="ECO:0000255" key="3">
    <source>
        <dbReference type="PROSITE-ProRule" id="PRU00498"/>
    </source>
</evidence>
<evidence type="ECO:0000269" key="4">
    <source>
    </source>
</evidence>
<evidence type="ECO:0000303" key="5">
    <source>
    </source>
</evidence>
<evidence type="ECO:0000305" key="6"/>
<evidence type="ECO:0000305" key="7">
    <source>
    </source>
</evidence>
<organism>
    <name type="scientific">Milnesium tardigradum</name>
    <name type="common">Water bear</name>
    <name type="synonym">Tardigrade</name>
    <dbReference type="NCBI Taxonomy" id="46460"/>
    <lineage>
        <taxon>Eukaryota</taxon>
        <taxon>Metazoa</taxon>
        <taxon>Ecdysozoa</taxon>
        <taxon>Tardigrada</taxon>
        <taxon>Eutardigrada</taxon>
        <taxon>Apochela</taxon>
        <taxon>Milnesiidae</taxon>
        <taxon>Milnesium</taxon>
    </lineage>
</organism>
<dbReference type="EMBL" id="JN378737">
    <property type="protein sequence ID" value="AEP14556.2"/>
    <property type="molecule type" value="mRNA"/>
</dbReference>
<dbReference type="SMR" id="G5CTF9"/>
<dbReference type="GlyCosmos" id="G5CTF9">
    <property type="glycosylation" value="2 sites, No reported glycans"/>
</dbReference>
<dbReference type="GO" id="GO:0016323">
    <property type="term" value="C:basolateral plasma membrane"/>
    <property type="evidence" value="ECO:0007669"/>
    <property type="project" value="TreeGrafter"/>
</dbReference>
<dbReference type="GO" id="GO:0005886">
    <property type="term" value="C:plasma membrane"/>
    <property type="evidence" value="ECO:0000250"/>
    <property type="project" value="UniProtKB"/>
</dbReference>
<dbReference type="GO" id="GO:0015254">
    <property type="term" value="F:glycerol channel activity"/>
    <property type="evidence" value="ECO:0007669"/>
    <property type="project" value="TreeGrafter"/>
</dbReference>
<dbReference type="GO" id="GO:0015250">
    <property type="term" value="F:water channel activity"/>
    <property type="evidence" value="ECO:0007669"/>
    <property type="project" value="TreeGrafter"/>
</dbReference>
<dbReference type="CDD" id="cd00333">
    <property type="entry name" value="MIP"/>
    <property type="match status" value="1"/>
</dbReference>
<dbReference type="Gene3D" id="1.20.1080.10">
    <property type="entry name" value="Glycerol uptake facilitator protein"/>
    <property type="match status" value="1"/>
</dbReference>
<dbReference type="InterPro" id="IPR023271">
    <property type="entry name" value="Aquaporin-like"/>
</dbReference>
<dbReference type="InterPro" id="IPR000425">
    <property type="entry name" value="MIP"/>
</dbReference>
<dbReference type="InterPro" id="IPR050363">
    <property type="entry name" value="MIP/Aquaporin"/>
</dbReference>
<dbReference type="PANTHER" id="PTHR43829">
    <property type="entry name" value="AQUAPORIN OR AQUAGLYCEROPORIN RELATED"/>
    <property type="match status" value="1"/>
</dbReference>
<dbReference type="PANTHER" id="PTHR43829:SF9">
    <property type="entry name" value="AQUAPORIN-9"/>
    <property type="match status" value="1"/>
</dbReference>
<dbReference type="Pfam" id="PF00230">
    <property type="entry name" value="MIP"/>
    <property type="match status" value="1"/>
</dbReference>
<dbReference type="PRINTS" id="PR02019">
    <property type="entry name" value="AQUAPORIN7"/>
</dbReference>
<dbReference type="PRINTS" id="PR00783">
    <property type="entry name" value="MINTRINSICP"/>
</dbReference>
<dbReference type="SUPFAM" id="SSF81338">
    <property type="entry name" value="Aquaporin-like"/>
    <property type="match status" value="1"/>
</dbReference>
<keyword id="KW-1003">Cell membrane</keyword>
<keyword id="KW-0325">Glycoprotein</keyword>
<keyword id="KW-0472">Membrane</keyword>
<keyword id="KW-0677">Repeat</keyword>
<keyword id="KW-0346">Stress response</keyword>
<keyword id="KW-0812">Transmembrane</keyword>
<keyword id="KW-1133">Transmembrane helix</keyword>
<keyword id="KW-0813">Transport</keyword>
<reference key="1">
    <citation type="journal article" date="2013" name="Bioinf. Biol. Insights">
        <title>The aquaporin channel repertoire of the tardigrade Milnesium tardigradum.</title>
        <authorList>
            <person name="Grohme M.A."/>
            <person name="Mali B."/>
            <person name="Welnicz W."/>
            <person name="Michel S."/>
            <person name="Schill R.O."/>
            <person name="Frohme M."/>
        </authorList>
    </citation>
    <scope>NUCLEOTIDE SEQUENCE [MRNA]</scope>
    <scope>DOMAIN</scope>
    <scope>INDUCTION</scope>
</reference>
<sequence>MCISEGKMDWRSWLRKKFQVRSQLLRGCMAEFLAVFVLMVFTEGCSASAIFTHRRNDLLFAAFGSGLAVTMAVYVAGGVTGAFLNPAIAVAFSVLGKLPWKNCFCYMIAQYLGAFLASLAIYAQYYDALNIFDGGHRQVLGDNGTAQIWSTYPQAFLSPQGAFVDQVFGTALLIIVVLSMVDKKNWKPQNGYFPIAIGLLIVVLDISLAYNAGAALNPSRDLAPRLFTYVAGYGTETFSVKGYTWFFVPVVGSHAGAIVGAVIYQLFIGAQWPQDDLDDSNSVSSMSIHEKNFSLAKRKNTRNFNLDITRDFKERNGISTVLY</sequence>
<protein>
    <recommendedName>
        <fullName evidence="5">Aquaporin-2</fullName>
        <shortName evidence="5">AQP-2</shortName>
    </recommendedName>
</protein>
<name>AQP2_MILTA</name>
<accession>G5CTF9</accession>